<dbReference type="EMBL" id="CR859949">
    <property type="protein sequence ID" value="CAH92103.1"/>
    <property type="molecule type" value="mRNA"/>
</dbReference>
<dbReference type="RefSeq" id="NP_001126228.1">
    <property type="nucleotide sequence ID" value="NM_001132756.1"/>
</dbReference>
<dbReference type="SMR" id="Q5R807"/>
<dbReference type="FunCoup" id="Q5R807">
    <property type="interactions" value="2919"/>
</dbReference>
<dbReference type="STRING" id="9601.ENSPPYP00000017377"/>
<dbReference type="GeneID" id="100173197"/>
<dbReference type="KEGG" id="pon:100173197"/>
<dbReference type="CTD" id="115548"/>
<dbReference type="eggNOG" id="KOG2398">
    <property type="taxonomic scope" value="Eukaryota"/>
</dbReference>
<dbReference type="InParanoid" id="Q5R807"/>
<dbReference type="OrthoDB" id="5593455at2759"/>
<dbReference type="Proteomes" id="UP000001595">
    <property type="component" value="Unplaced"/>
</dbReference>
<dbReference type="GO" id="GO:0005905">
    <property type="term" value="C:clathrin-coated pit"/>
    <property type="evidence" value="ECO:0000250"/>
    <property type="project" value="UniProtKB"/>
</dbReference>
<dbReference type="GO" id="GO:0030136">
    <property type="term" value="C:clathrin-coated vesicle"/>
    <property type="evidence" value="ECO:0007669"/>
    <property type="project" value="TreeGrafter"/>
</dbReference>
<dbReference type="GO" id="GO:0005886">
    <property type="term" value="C:plasma membrane"/>
    <property type="evidence" value="ECO:0000250"/>
    <property type="project" value="UniProtKB"/>
</dbReference>
<dbReference type="GO" id="GO:0098793">
    <property type="term" value="C:presynapse"/>
    <property type="evidence" value="ECO:0007669"/>
    <property type="project" value="GOC"/>
</dbReference>
<dbReference type="GO" id="GO:0035091">
    <property type="term" value="F:phosphatidylinositol binding"/>
    <property type="evidence" value="ECO:0000250"/>
    <property type="project" value="UniProtKB"/>
</dbReference>
<dbReference type="GO" id="GO:0005546">
    <property type="term" value="F:phosphatidylinositol-4,5-bisphosphate binding"/>
    <property type="evidence" value="ECO:0000250"/>
    <property type="project" value="UniProtKB"/>
</dbReference>
<dbReference type="GO" id="GO:0001786">
    <property type="term" value="F:phosphatidylserine binding"/>
    <property type="evidence" value="ECO:0000250"/>
    <property type="project" value="UniProtKB"/>
</dbReference>
<dbReference type="GO" id="GO:0048268">
    <property type="term" value="P:clathrin coat assembly"/>
    <property type="evidence" value="ECO:0000250"/>
    <property type="project" value="UniProtKB"/>
</dbReference>
<dbReference type="GO" id="GO:0072583">
    <property type="term" value="P:clathrin-dependent endocytosis"/>
    <property type="evidence" value="ECO:0000250"/>
    <property type="project" value="UniProtKB"/>
</dbReference>
<dbReference type="GO" id="GO:0010324">
    <property type="term" value="P:membrane invagination"/>
    <property type="evidence" value="ECO:0000250"/>
    <property type="project" value="UniProtKB"/>
</dbReference>
<dbReference type="GO" id="GO:0072659">
    <property type="term" value="P:protein localization to plasma membrane"/>
    <property type="evidence" value="ECO:0000250"/>
    <property type="project" value="UniProtKB"/>
</dbReference>
<dbReference type="GO" id="GO:0048488">
    <property type="term" value="P:synaptic vesicle endocytosis"/>
    <property type="evidence" value="ECO:0007669"/>
    <property type="project" value="TreeGrafter"/>
</dbReference>
<dbReference type="CDD" id="cd07673">
    <property type="entry name" value="F-BAR_FCHO2"/>
    <property type="match status" value="1"/>
</dbReference>
<dbReference type="CDD" id="cd09267">
    <property type="entry name" value="FCHo2_MHD"/>
    <property type="match status" value="1"/>
</dbReference>
<dbReference type="FunFam" id="1.20.1270.60:FF:000016">
    <property type="entry name" value="FCH domain only protein 2"/>
    <property type="match status" value="1"/>
</dbReference>
<dbReference type="FunFam" id="2.60.40.1170:FF:000005">
    <property type="entry name" value="SH3-containing GRB2-like protein 3-interacting protein 1 isoform X3"/>
    <property type="match status" value="1"/>
</dbReference>
<dbReference type="Gene3D" id="1.20.1270.60">
    <property type="entry name" value="Arfaptin homology (AH) domain/BAR domain"/>
    <property type="match status" value="1"/>
</dbReference>
<dbReference type="InterPro" id="IPR027267">
    <property type="entry name" value="AH/BAR_dom_sf"/>
</dbReference>
<dbReference type="InterPro" id="IPR031160">
    <property type="entry name" value="F_BAR"/>
</dbReference>
<dbReference type="InterPro" id="IPR001060">
    <property type="entry name" value="FCH_dom"/>
</dbReference>
<dbReference type="InterPro" id="IPR030122">
    <property type="entry name" value="FCHo2_F-BAR"/>
</dbReference>
<dbReference type="InterPro" id="IPR054713">
    <property type="entry name" value="GMIP/FCHO2-like_FCH"/>
</dbReference>
<dbReference type="InterPro" id="IPR028565">
    <property type="entry name" value="MHD"/>
</dbReference>
<dbReference type="InterPro" id="IPR018808">
    <property type="entry name" value="Muniscin_C"/>
</dbReference>
<dbReference type="PANTHER" id="PTHR23065:SF8">
    <property type="entry name" value="F-BAR DOMAIN ONLY PROTEIN 2"/>
    <property type="match status" value="1"/>
</dbReference>
<dbReference type="PANTHER" id="PTHR23065">
    <property type="entry name" value="PROLINE-SERINE-THREONINE PHOSPHATASE INTERACTING PROTEIN 1"/>
    <property type="match status" value="1"/>
</dbReference>
<dbReference type="Pfam" id="PF22699">
    <property type="entry name" value="GMIP-like_FCH"/>
    <property type="match status" value="1"/>
</dbReference>
<dbReference type="Pfam" id="PF10291">
    <property type="entry name" value="muHD"/>
    <property type="match status" value="1"/>
</dbReference>
<dbReference type="SMART" id="SM00055">
    <property type="entry name" value="FCH"/>
    <property type="match status" value="1"/>
</dbReference>
<dbReference type="SUPFAM" id="SSF103657">
    <property type="entry name" value="BAR/IMD domain-like"/>
    <property type="match status" value="1"/>
</dbReference>
<dbReference type="PROSITE" id="PS51741">
    <property type="entry name" value="F_BAR"/>
    <property type="match status" value="1"/>
</dbReference>
<dbReference type="PROSITE" id="PS51072">
    <property type="entry name" value="MHD"/>
    <property type="match status" value="1"/>
</dbReference>
<reference key="1">
    <citation type="submission" date="2004-11" db="EMBL/GenBank/DDBJ databases">
        <authorList>
            <consortium name="The German cDNA consortium"/>
        </authorList>
    </citation>
    <scope>NUCLEOTIDE SEQUENCE [LARGE SCALE MRNA]</scope>
    <source>
        <tissue>Kidney</tissue>
    </source>
</reference>
<proteinExistence type="evidence at transcript level"/>
<feature type="chain" id="PRO_0000266007" description="F-BAR domain only protein 2">
    <location>
        <begin position="1"/>
        <end position="810"/>
    </location>
</feature>
<feature type="domain" description="F-BAR" evidence="6">
    <location>
        <begin position="3"/>
        <end position="250"/>
    </location>
</feature>
<feature type="domain" description="MHD" evidence="5">
    <location>
        <begin position="542"/>
        <end position="809"/>
    </location>
</feature>
<feature type="region of interest" description="Mediates dimerization and binding to membranes enriched in Pi(4,5)-P2 and induces their tubulation" evidence="1">
    <location>
        <begin position="3"/>
        <end position="274"/>
    </location>
</feature>
<feature type="region of interest" description="Disordered" evidence="7">
    <location>
        <begin position="301"/>
        <end position="352"/>
    </location>
</feature>
<feature type="region of interest" description="Disordered" evidence="7">
    <location>
        <begin position="403"/>
        <end position="537"/>
    </location>
</feature>
<feature type="region of interest" description="Mediates interaction with DAB2, EPS15, EPS15R and ITSN1" evidence="1">
    <location>
        <begin position="521"/>
        <end position="810"/>
    </location>
</feature>
<feature type="coiled-coil region" evidence="4">
    <location>
        <begin position="87"/>
        <end position="156"/>
    </location>
</feature>
<feature type="compositionally biased region" description="Low complexity" evidence="7">
    <location>
        <begin position="433"/>
        <end position="456"/>
    </location>
</feature>
<feature type="compositionally biased region" description="Low complexity" evidence="7">
    <location>
        <begin position="502"/>
        <end position="521"/>
    </location>
</feature>
<feature type="modified residue" description="Phosphoserine" evidence="3">
    <location>
        <position position="312"/>
    </location>
</feature>
<feature type="modified residue" description="Phosphothreonine" evidence="2">
    <location>
        <position position="385"/>
    </location>
</feature>
<feature type="modified residue" description="Phosphoserine" evidence="2">
    <location>
        <position position="387"/>
    </location>
</feature>
<feature type="modified residue" description="Phosphoserine" evidence="2">
    <location>
        <position position="394"/>
    </location>
</feature>
<feature type="modified residue" description="Phosphoserine" evidence="2">
    <location>
        <position position="403"/>
    </location>
</feature>
<feature type="modified residue" description="Phosphoserine" evidence="2">
    <location>
        <position position="488"/>
    </location>
</feature>
<feature type="modified residue" description="Phosphoserine" evidence="3">
    <location>
        <position position="493"/>
    </location>
</feature>
<feature type="modified residue" description="Phosphoserine" evidence="2">
    <location>
        <position position="496"/>
    </location>
</feature>
<feature type="modified residue" description="Phosphoserine" evidence="2">
    <location>
        <position position="508"/>
    </location>
</feature>
<feature type="modified residue" description="Phosphoserine" evidence="3">
    <location>
        <position position="510"/>
    </location>
</feature>
<feature type="modified residue" description="Phosphoserine" evidence="2">
    <location>
        <position position="511"/>
    </location>
</feature>
<feature type="modified residue" description="Phosphoserine" evidence="2">
    <location>
        <position position="533"/>
    </location>
</feature>
<feature type="disulfide bond" description="Interchain (with C-273)" evidence="1">
    <location>
        <position position="147"/>
    </location>
</feature>
<feature type="disulfide bond" description="Interchain (with C-147)" evidence="1">
    <location>
        <position position="273"/>
    </location>
</feature>
<feature type="cross-link" description="Glycyl lysine isopeptide (Lys-Gly) (interchain with G-Cter in SUMO2)" evidence="2">
    <location>
        <position position="297"/>
    </location>
</feature>
<accession>Q5R807</accession>
<protein>
    <recommendedName>
        <fullName>F-BAR domain only protein 2</fullName>
    </recommendedName>
</protein>
<comment type="function">
    <text evidence="1">Functions in an early step of clathrin-mediated endocytosis. Has both a membrane binding/bending activity and the ability to recruit proteins essential to the formation of functional clathrin-coated pits. Has a lipid-binding activity with a preference for membranes enriched in phosphatidylserine and phosphoinositides (Pi(4,5) biphosphate) like the plasma membrane. Its membrane-bending activity might be important for the subsequent action of clathrin and adaptors in the formation of clathrin-coated vesicles. Involved in adaptor protein complex AP-2-dependent endocytosis of the transferrin receptor, it also functions in the AP-2-independent endocytosis of the LDL receptor (By similarity).</text>
</comment>
<comment type="subunit">
    <text evidence="1">Homodimer; disulfide-linked. May form homotetramer. Interacts with AP2A1. Interacts with EPS15, EPS15R, ITSN1 and ITSN2; recruit those scaffolding proteins which in turn may interact with the adaptor protein complex AP-2 at the plasma membrane. Interacts with DAB2 (via DPF motifs); mediates LDL receptor/LDLR endocytosis (By similarity).</text>
</comment>
<comment type="subcellular location">
    <subcellularLocation>
        <location evidence="1">Membrane</location>
        <location evidence="1">Clathrin-coated pit</location>
        <topology evidence="1">Peripheral membrane protein</topology>
        <orientation evidence="1">Cytoplasmic side</orientation>
    </subcellularLocation>
    <text evidence="1">Associated with forming but not mature clathrin-coated vesicles. The recruitment to coated-pits precede the one of clathrin and the adaptor protein complex AP-2 (By similarity).</text>
</comment>
<comment type="PTM">
    <text evidence="1">Ubiquitinated. Mainly undergoes monoubiquitination but also polyubiquitination (By similarity).</text>
</comment>
<comment type="similarity">
    <text evidence="8">Belongs to the FCHO family.</text>
</comment>
<organism>
    <name type="scientific">Pongo abelii</name>
    <name type="common">Sumatran orangutan</name>
    <name type="synonym">Pongo pygmaeus abelii</name>
    <dbReference type="NCBI Taxonomy" id="9601"/>
    <lineage>
        <taxon>Eukaryota</taxon>
        <taxon>Metazoa</taxon>
        <taxon>Chordata</taxon>
        <taxon>Craniata</taxon>
        <taxon>Vertebrata</taxon>
        <taxon>Euteleostomi</taxon>
        <taxon>Mammalia</taxon>
        <taxon>Eutheria</taxon>
        <taxon>Euarchontoglires</taxon>
        <taxon>Primates</taxon>
        <taxon>Haplorrhini</taxon>
        <taxon>Catarrhini</taxon>
        <taxon>Hominidae</taxon>
        <taxon>Pongo</taxon>
    </lineage>
</organism>
<gene>
    <name type="primary">FCHO2</name>
</gene>
<sequence length="810" mass="88984">MVMAYFVENFWGEKNSGFDVLYHNMKHGQISTKELADFVRERATIEEAYSRSMTKLAKSASNYSQLGTFAPVWDVFKTSTEKLANCHLDLVRKLQELIKEVQKYGEEQVKSHKKTKEEVAGTLEAVQTIQSTTQALQKSKENYNAKCVEQERLKKEGATQREIEKAAVKSKKATDTYKLYVEKYALAKADFEQKMTETAQKFQDIEETHLIHIKEVIGSLSNAIKEIHLQIGQVHEEFINNMANTTVESLIQKFAESKGTGKERPGLIEFEECDTASAVEGIKPRKRKTFALPGIIKKEKDAESVECPDADSLNIPDVDEEGYSIKPETNQNDTKENHFYSSSDSDSEDEEPKKYRIEIKPMHPNNSHHTMASLDELRVSIGNITLSPAISRHSPVQMNRNLSNEELTKSKPSAPPNERGTSDLLAWDPLFGPSLDSSSSSSLTSSSSARPTTPLSVGTIVPPPRPASRPKLTSGKLSGINEIPRPFSPPVTSNTSPPPAAPLARAESSSSISSSASLSAANTPTVGVSRGPSPVSLGNQDTLPVAVALTESVNAYFKGADPTKCIVKITGDMTMSFPSGIIKVFTSNPTPAVLCFRVKNISRLEQILPNAQLVFSDPSQCDSNTKDFWMNMQAVTVYLKKLSEQNPAASYYNVDVLKYQVSSNGIQSTPLNLATYWKCSASTTDLRVDYKYNPEAMVAPSVLSNIQVVVPVDGGVMNMQSLPPAIWNAEQMKAFWKLSSISEKSENGGSGSLRAKFDLSEGPSKPTTLAVQFLSEGSTLSGVDFELVGTGYRLSLIKKRFATGRYLADC</sequence>
<name>FCHO2_PONAB</name>
<keyword id="KW-0168">Coated pit</keyword>
<keyword id="KW-0175">Coiled coil</keyword>
<keyword id="KW-1015">Disulfide bond</keyword>
<keyword id="KW-0254">Endocytosis</keyword>
<keyword id="KW-1017">Isopeptide bond</keyword>
<keyword id="KW-0472">Membrane</keyword>
<keyword id="KW-0597">Phosphoprotein</keyword>
<keyword id="KW-1185">Reference proteome</keyword>
<keyword id="KW-0832">Ubl conjugation</keyword>
<evidence type="ECO:0000250" key="1"/>
<evidence type="ECO:0000250" key="2">
    <source>
        <dbReference type="UniProtKB" id="Q0JRZ9"/>
    </source>
</evidence>
<evidence type="ECO:0000250" key="3">
    <source>
        <dbReference type="UniProtKB" id="Q3UQN2"/>
    </source>
</evidence>
<evidence type="ECO:0000255" key="4"/>
<evidence type="ECO:0000255" key="5">
    <source>
        <dbReference type="PROSITE-ProRule" id="PRU00404"/>
    </source>
</evidence>
<evidence type="ECO:0000255" key="6">
    <source>
        <dbReference type="PROSITE-ProRule" id="PRU01077"/>
    </source>
</evidence>
<evidence type="ECO:0000256" key="7">
    <source>
        <dbReference type="SAM" id="MobiDB-lite"/>
    </source>
</evidence>
<evidence type="ECO:0000305" key="8"/>